<evidence type="ECO:0000255" key="1">
    <source>
        <dbReference type="HAMAP-Rule" id="MF_00741"/>
    </source>
</evidence>
<organism>
    <name type="scientific">Clostridium botulinum (strain ATCC 19397 / Type A)</name>
    <dbReference type="NCBI Taxonomy" id="441770"/>
    <lineage>
        <taxon>Bacteria</taxon>
        <taxon>Bacillati</taxon>
        <taxon>Bacillota</taxon>
        <taxon>Clostridia</taxon>
        <taxon>Eubacteriales</taxon>
        <taxon>Clostridiaceae</taxon>
        <taxon>Clostridium</taxon>
    </lineage>
</organism>
<dbReference type="EC" id="6.3.3.1" evidence="1"/>
<dbReference type="EMBL" id="CP000726">
    <property type="protein sequence ID" value="ABS34413.1"/>
    <property type="molecule type" value="Genomic_DNA"/>
</dbReference>
<dbReference type="RefSeq" id="WP_012099415.1">
    <property type="nucleotide sequence ID" value="NC_009697.1"/>
</dbReference>
<dbReference type="SMR" id="A7FXD5"/>
<dbReference type="GeneID" id="5185643"/>
<dbReference type="KEGG" id="cba:CLB_2840"/>
<dbReference type="HOGENOM" id="CLU_047116_0_0_9"/>
<dbReference type="UniPathway" id="UPA00074">
    <property type="reaction ID" value="UER00129"/>
</dbReference>
<dbReference type="GO" id="GO:0005829">
    <property type="term" value="C:cytosol"/>
    <property type="evidence" value="ECO:0007669"/>
    <property type="project" value="TreeGrafter"/>
</dbReference>
<dbReference type="GO" id="GO:0005524">
    <property type="term" value="F:ATP binding"/>
    <property type="evidence" value="ECO:0007669"/>
    <property type="project" value="UniProtKB-KW"/>
</dbReference>
<dbReference type="GO" id="GO:0004637">
    <property type="term" value="F:phosphoribosylamine-glycine ligase activity"/>
    <property type="evidence" value="ECO:0007669"/>
    <property type="project" value="TreeGrafter"/>
</dbReference>
<dbReference type="GO" id="GO:0004641">
    <property type="term" value="F:phosphoribosylformylglycinamidine cyclo-ligase activity"/>
    <property type="evidence" value="ECO:0007669"/>
    <property type="project" value="UniProtKB-UniRule"/>
</dbReference>
<dbReference type="GO" id="GO:0006189">
    <property type="term" value="P:'de novo' IMP biosynthetic process"/>
    <property type="evidence" value="ECO:0007669"/>
    <property type="project" value="UniProtKB-UniRule"/>
</dbReference>
<dbReference type="GO" id="GO:0046084">
    <property type="term" value="P:adenine biosynthetic process"/>
    <property type="evidence" value="ECO:0007669"/>
    <property type="project" value="TreeGrafter"/>
</dbReference>
<dbReference type="CDD" id="cd02196">
    <property type="entry name" value="PurM"/>
    <property type="match status" value="1"/>
</dbReference>
<dbReference type="FunFam" id="3.30.1330.10:FF:000001">
    <property type="entry name" value="Phosphoribosylformylglycinamidine cyclo-ligase"/>
    <property type="match status" value="1"/>
</dbReference>
<dbReference type="FunFam" id="3.90.650.10:FF:000011">
    <property type="entry name" value="Phosphoribosylformylglycinamidine cyclo-ligase"/>
    <property type="match status" value="1"/>
</dbReference>
<dbReference type="Gene3D" id="3.90.650.10">
    <property type="entry name" value="PurM-like C-terminal domain"/>
    <property type="match status" value="1"/>
</dbReference>
<dbReference type="Gene3D" id="3.30.1330.10">
    <property type="entry name" value="PurM-like, N-terminal domain"/>
    <property type="match status" value="1"/>
</dbReference>
<dbReference type="HAMAP" id="MF_00741">
    <property type="entry name" value="AIRS"/>
    <property type="match status" value="1"/>
</dbReference>
<dbReference type="InterPro" id="IPR010918">
    <property type="entry name" value="PurM-like_C_dom"/>
</dbReference>
<dbReference type="InterPro" id="IPR036676">
    <property type="entry name" value="PurM-like_C_sf"/>
</dbReference>
<dbReference type="InterPro" id="IPR016188">
    <property type="entry name" value="PurM-like_N"/>
</dbReference>
<dbReference type="InterPro" id="IPR036921">
    <property type="entry name" value="PurM-like_N_sf"/>
</dbReference>
<dbReference type="InterPro" id="IPR004733">
    <property type="entry name" value="PurM_cligase"/>
</dbReference>
<dbReference type="NCBIfam" id="TIGR00878">
    <property type="entry name" value="purM"/>
    <property type="match status" value="1"/>
</dbReference>
<dbReference type="PANTHER" id="PTHR10520:SF12">
    <property type="entry name" value="TRIFUNCTIONAL PURINE BIOSYNTHETIC PROTEIN ADENOSINE-3"/>
    <property type="match status" value="1"/>
</dbReference>
<dbReference type="PANTHER" id="PTHR10520">
    <property type="entry name" value="TRIFUNCTIONAL PURINE BIOSYNTHETIC PROTEIN ADENOSINE-3-RELATED"/>
    <property type="match status" value="1"/>
</dbReference>
<dbReference type="Pfam" id="PF00586">
    <property type="entry name" value="AIRS"/>
    <property type="match status" value="1"/>
</dbReference>
<dbReference type="Pfam" id="PF02769">
    <property type="entry name" value="AIRS_C"/>
    <property type="match status" value="1"/>
</dbReference>
<dbReference type="SUPFAM" id="SSF56042">
    <property type="entry name" value="PurM C-terminal domain-like"/>
    <property type="match status" value="1"/>
</dbReference>
<dbReference type="SUPFAM" id="SSF55326">
    <property type="entry name" value="PurM N-terminal domain-like"/>
    <property type="match status" value="1"/>
</dbReference>
<gene>
    <name evidence="1" type="primary">purM</name>
    <name type="ordered locus">CLB_2840</name>
</gene>
<accession>A7FXD5</accession>
<reference key="1">
    <citation type="journal article" date="2007" name="PLoS ONE">
        <title>Analysis of the neurotoxin complex genes in Clostridium botulinum A1-A4 and B1 strains: BoNT/A3, /Ba4 and /B1 clusters are located within plasmids.</title>
        <authorList>
            <person name="Smith T.J."/>
            <person name="Hill K.K."/>
            <person name="Foley B.T."/>
            <person name="Detter J.C."/>
            <person name="Munk A.C."/>
            <person name="Bruce D.C."/>
            <person name="Doggett N.A."/>
            <person name="Smith L.A."/>
            <person name="Marks J.D."/>
            <person name="Xie G."/>
            <person name="Brettin T.S."/>
        </authorList>
    </citation>
    <scope>NUCLEOTIDE SEQUENCE [LARGE SCALE GENOMIC DNA]</scope>
    <source>
        <strain>ATCC 19397 / Type A</strain>
    </source>
</reference>
<proteinExistence type="inferred from homology"/>
<keyword id="KW-0067">ATP-binding</keyword>
<keyword id="KW-0963">Cytoplasm</keyword>
<keyword id="KW-0436">Ligase</keyword>
<keyword id="KW-0547">Nucleotide-binding</keyword>
<keyword id="KW-0658">Purine biosynthesis</keyword>
<feature type="chain" id="PRO_1000046432" description="Phosphoribosylformylglycinamidine cyclo-ligase">
    <location>
        <begin position="1"/>
        <end position="331"/>
    </location>
</feature>
<protein>
    <recommendedName>
        <fullName evidence="1">Phosphoribosylformylglycinamidine cyclo-ligase</fullName>
        <ecNumber evidence="1">6.3.3.1</ecNumber>
    </recommendedName>
    <alternativeName>
        <fullName evidence="1">AIR synthase</fullName>
    </alternativeName>
    <alternativeName>
        <fullName evidence="1">AIRS</fullName>
    </alternativeName>
    <alternativeName>
        <fullName evidence="1">Phosphoribosyl-aminoimidazole synthetase</fullName>
    </alternativeName>
</protein>
<sequence>MVSYKEAGVNIEEGYKSVDLIKKHASKTFTKGVLNNLGSFAGMFELPKYKNPVLVSGTDGVGTKLDIAFRMKKYNTVGIDCVAMCINDILCHGAKPLFFLDYIACGKLEAEVAAQLVEGVSNGCIQSECALIGGETAEMPGFYRDGEYDIAGFAVGIAEKDEIIDGSKIEDGDILIGIASSGPHSNGYSLIRKLVEDLHKDFEGNKIGNTLLTPTKIYVKPVMKLLEKYNIKGMAHVTGGGFYENIPRMFKEDFTAVINKKSYPLPNIFSHLISLGIEEDHMYNTFNMGIGFVLCVNEKDGENIIKDLIEMGEKGYKIGYVKKGDKSVELI</sequence>
<comment type="catalytic activity">
    <reaction evidence="1">
        <text>2-formamido-N(1)-(5-O-phospho-beta-D-ribosyl)acetamidine + ATP = 5-amino-1-(5-phospho-beta-D-ribosyl)imidazole + ADP + phosphate + H(+)</text>
        <dbReference type="Rhea" id="RHEA:23032"/>
        <dbReference type="ChEBI" id="CHEBI:15378"/>
        <dbReference type="ChEBI" id="CHEBI:30616"/>
        <dbReference type="ChEBI" id="CHEBI:43474"/>
        <dbReference type="ChEBI" id="CHEBI:137981"/>
        <dbReference type="ChEBI" id="CHEBI:147287"/>
        <dbReference type="ChEBI" id="CHEBI:456216"/>
        <dbReference type="EC" id="6.3.3.1"/>
    </reaction>
</comment>
<comment type="pathway">
    <text evidence="1">Purine metabolism; IMP biosynthesis via de novo pathway; 5-amino-1-(5-phospho-D-ribosyl)imidazole from N(2)-formyl-N(1)-(5-phospho-D-ribosyl)glycinamide: step 2/2.</text>
</comment>
<comment type="subcellular location">
    <subcellularLocation>
        <location evidence="1">Cytoplasm</location>
    </subcellularLocation>
</comment>
<comment type="similarity">
    <text evidence="1">Belongs to the AIR synthase family.</text>
</comment>
<name>PUR5_CLOB1</name>